<proteinExistence type="evidence at transcript level"/>
<dbReference type="EMBL" id="AF108724">
    <property type="protein sequence ID" value="AAD23964.1"/>
    <property type="molecule type" value="mRNA"/>
</dbReference>
<dbReference type="SMR" id="Q9XEK6"/>
<dbReference type="GO" id="GO:1990904">
    <property type="term" value="C:ribonucleoprotein complex"/>
    <property type="evidence" value="ECO:0007669"/>
    <property type="project" value="UniProtKB-KW"/>
</dbReference>
<dbReference type="GO" id="GO:0005840">
    <property type="term" value="C:ribosome"/>
    <property type="evidence" value="ECO:0007669"/>
    <property type="project" value="UniProtKB-KW"/>
</dbReference>
<dbReference type="GO" id="GO:0003735">
    <property type="term" value="F:structural constituent of ribosome"/>
    <property type="evidence" value="ECO:0007669"/>
    <property type="project" value="InterPro"/>
</dbReference>
<dbReference type="GO" id="GO:0006412">
    <property type="term" value="P:translation"/>
    <property type="evidence" value="ECO:0007669"/>
    <property type="project" value="InterPro"/>
</dbReference>
<dbReference type="FunFam" id="3.30.420.80:FF:000002">
    <property type="entry name" value="40S ribosomal protein S14"/>
    <property type="match status" value="1"/>
</dbReference>
<dbReference type="Gene3D" id="3.30.420.80">
    <property type="entry name" value="Ribosomal protein S11"/>
    <property type="match status" value="1"/>
</dbReference>
<dbReference type="HAMAP" id="MF_01310">
    <property type="entry name" value="Ribosomal_uS11"/>
    <property type="match status" value="1"/>
</dbReference>
<dbReference type="InterPro" id="IPR001971">
    <property type="entry name" value="Ribosomal_uS11"/>
</dbReference>
<dbReference type="InterPro" id="IPR018102">
    <property type="entry name" value="Ribosomal_uS11_CS"/>
</dbReference>
<dbReference type="InterPro" id="IPR036967">
    <property type="entry name" value="Ribosomal_uS11_sf"/>
</dbReference>
<dbReference type="NCBIfam" id="NF007176">
    <property type="entry name" value="PRK09607.1"/>
    <property type="match status" value="1"/>
</dbReference>
<dbReference type="PANTHER" id="PTHR11759">
    <property type="entry name" value="40S RIBOSOMAL PROTEIN S14/30S RIBOSOMAL PROTEIN S11"/>
    <property type="match status" value="1"/>
</dbReference>
<dbReference type="Pfam" id="PF00411">
    <property type="entry name" value="Ribosomal_S11"/>
    <property type="match status" value="1"/>
</dbReference>
<dbReference type="PIRSF" id="PIRSF002131">
    <property type="entry name" value="Ribosomal_S11"/>
    <property type="match status" value="1"/>
</dbReference>
<dbReference type="SUPFAM" id="SSF53137">
    <property type="entry name" value="Translational machinery components"/>
    <property type="match status" value="1"/>
</dbReference>
<dbReference type="PROSITE" id="PS00054">
    <property type="entry name" value="RIBOSOMAL_S11"/>
    <property type="match status" value="1"/>
</dbReference>
<comment type="similarity">
    <text evidence="2">Belongs to the universal ribosomal protein uS11 family.</text>
</comment>
<reference key="1">
    <citation type="submission" date="1998-11" db="EMBL/GenBank/DDBJ databases">
        <title>Environmental regulation of three ribosomal proteins in the desiccation-tolerant Bryophyte, Tortula ruralis.</title>
        <authorList>
            <person name="Wood A.J."/>
            <person name="Duff R.J."/>
            <person name="Oliver M.J."/>
        </authorList>
    </citation>
    <scope>NUCLEOTIDE SEQUENCE [MRNA]</scope>
    <source>
        <tissue>Gametophyte</tissue>
    </source>
</reference>
<accession>Q9XEK6</accession>
<keyword id="KW-0687">Ribonucleoprotein</keyword>
<keyword id="KW-0689">Ribosomal protein</keyword>
<organism>
    <name type="scientific">Syntrichia ruralis</name>
    <name type="common">Great hairy screw-moss</name>
    <name type="synonym">Tortula ruralis</name>
    <dbReference type="NCBI Taxonomy" id="38588"/>
    <lineage>
        <taxon>Eukaryota</taxon>
        <taxon>Viridiplantae</taxon>
        <taxon>Streptophyta</taxon>
        <taxon>Embryophyta</taxon>
        <taxon>Bryophyta</taxon>
        <taxon>Bryophytina</taxon>
        <taxon>Bryopsida</taxon>
        <taxon>Dicranidae</taxon>
        <taxon>Pottiales</taxon>
        <taxon>Pottiaceae</taxon>
        <taxon>Syntrichia</taxon>
    </lineage>
</organism>
<gene>
    <name type="primary">RPS14</name>
</gene>
<protein>
    <recommendedName>
        <fullName evidence="2">Small ribosomal subunit protein uS11</fullName>
    </recommendedName>
    <alternativeName>
        <fullName>40S ribosomal protein S14</fullName>
    </alternativeName>
</protein>
<name>RS14_SYNRU</name>
<feature type="chain" id="PRO_0000123352" description="Small ribosomal subunit protein uS11">
    <location>
        <begin position="1"/>
        <end position="134"/>
    </location>
</feature>
<feature type="region of interest" description="Disordered" evidence="1">
    <location>
        <begin position="115"/>
        <end position="134"/>
    </location>
</feature>
<feature type="compositionally biased region" description="Basic residues" evidence="1">
    <location>
        <begin position="125"/>
        <end position="134"/>
    </location>
</feature>
<sequence length="134" mass="14417">MSGERRKVRAVFGVAHIFASFNDTFVHVTDLSGKETSLVLTGGMKVKADRDEASPYAAMLAAQDVAQRCKELGITALHINVRATGGNKTKTPGPGAQSLRALARSGMRIGRIEDVTPIPTDSTRRKGGRRGRRL</sequence>
<evidence type="ECO:0000256" key="1">
    <source>
        <dbReference type="SAM" id="MobiDB-lite"/>
    </source>
</evidence>
<evidence type="ECO:0000305" key="2"/>